<dbReference type="EC" id="1.1.1.27" evidence="2"/>
<dbReference type="EMBL" id="CP000736">
    <property type="protein sequence ID" value="ABR53500.1"/>
    <property type="molecule type" value="Genomic_DNA"/>
</dbReference>
<dbReference type="SMR" id="A6U4Y2"/>
<dbReference type="KEGG" id="sah:SaurJH1_2678"/>
<dbReference type="HOGENOM" id="CLU_045401_1_1_9"/>
<dbReference type="UniPathway" id="UPA00554">
    <property type="reaction ID" value="UER00611"/>
</dbReference>
<dbReference type="GO" id="GO:0005737">
    <property type="term" value="C:cytoplasm"/>
    <property type="evidence" value="ECO:0007669"/>
    <property type="project" value="UniProtKB-SubCell"/>
</dbReference>
<dbReference type="GO" id="GO:0004459">
    <property type="term" value="F:L-lactate dehydrogenase activity"/>
    <property type="evidence" value="ECO:0007669"/>
    <property type="project" value="UniProtKB-UniRule"/>
</dbReference>
<dbReference type="GO" id="GO:0006096">
    <property type="term" value="P:glycolytic process"/>
    <property type="evidence" value="ECO:0007669"/>
    <property type="project" value="UniProtKB-UniRule"/>
</dbReference>
<dbReference type="GO" id="GO:0006089">
    <property type="term" value="P:lactate metabolic process"/>
    <property type="evidence" value="ECO:0007669"/>
    <property type="project" value="TreeGrafter"/>
</dbReference>
<dbReference type="CDD" id="cd05291">
    <property type="entry name" value="HicDH_like"/>
    <property type="match status" value="1"/>
</dbReference>
<dbReference type="FunFam" id="3.40.50.720:FF:000018">
    <property type="entry name" value="Malate dehydrogenase"/>
    <property type="match status" value="1"/>
</dbReference>
<dbReference type="Gene3D" id="3.90.110.10">
    <property type="entry name" value="Lactate dehydrogenase/glycoside hydrolase, family 4, C-terminal"/>
    <property type="match status" value="1"/>
</dbReference>
<dbReference type="Gene3D" id="3.40.50.720">
    <property type="entry name" value="NAD(P)-binding Rossmann-like Domain"/>
    <property type="match status" value="1"/>
</dbReference>
<dbReference type="HAMAP" id="MF_00488">
    <property type="entry name" value="Lactate_dehydrog"/>
    <property type="match status" value="1"/>
</dbReference>
<dbReference type="InterPro" id="IPR001557">
    <property type="entry name" value="L-lactate/malate_DH"/>
</dbReference>
<dbReference type="InterPro" id="IPR011304">
    <property type="entry name" value="L-lactate_DH"/>
</dbReference>
<dbReference type="InterPro" id="IPR018177">
    <property type="entry name" value="L-lactate_DH_AS"/>
</dbReference>
<dbReference type="InterPro" id="IPR022383">
    <property type="entry name" value="Lactate/malate_DH_C"/>
</dbReference>
<dbReference type="InterPro" id="IPR001236">
    <property type="entry name" value="Lactate/malate_DH_N"/>
</dbReference>
<dbReference type="InterPro" id="IPR015955">
    <property type="entry name" value="Lactate_DH/Glyco_Ohase_4_C"/>
</dbReference>
<dbReference type="InterPro" id="IPR036291">
    <property type="entry name" value="NAD(P)-bd_dom_sf"/>
</dbReference>
<dbReference type="NCBIfam" id="TIGR01771">
    <property type="entry name" value="L-LDH-NAD"/>
    <property type="match status" value="1"/>
</dbReference>
<dbReference type="NCBIfam" id="NF000824">
    <property type="entry name" value="PRK00066.1"/>
    <property type="match status" value="1"/>
</dbReference>
<dbReference type="PANTHER" id="PTHR43128">
    <property type="entry name" value="L-2-HYDROXYCARBOXYLATE DEHYDROGENASE (NAD(P)(+))"/>
    <property type="match status" value="1"/>
</dbReference>
<dbReference type="PANTHER" id="PTHR43128:SF16">
    <property type="entry name" value="L-LACTATE DEHYDROGENASE"/>
    <property type="match status" value="1"/>
</dbReference>
<dbReference type="Pfam" id="PF02866">
    <property type="entry name" value="Ldh_1_C"/>
    <property type="match status" value="1"/>
</dbReference>
<dbReference type="Pfam" id="PF00056">
    <property type="entry name" value="Ldh_1_N"/>
    <property type="match status" value="1"/>
</dbReference>
<dbReference type="PIRSF" id="PIRSF000102">
    <property type="entry name" value="Lac_mal_DH"/>
    <property type="match status" value="1"/>
</dbReference>
<dbReference type="PRINTS" id="PR00086">
    <property type="entry name" value="LLDHDRGNASE"/>
</dbReference>
<dbReference type="SUPFAM" id="SSF56327">
    <property type="entry name" value="LDH C-terminal domain-like"/>
    <property type="match status" value="1"/>
</dbReference>
<dbReference type="SUPFAM" id="SSF51735">
    <property type="entry name" value="NAD(P)-binding Rossmann-fold domains"/>
    <property type="match status" value="1"/>
</dbReference>
<dbReference type="PROSITE" id="PS00064">
    <property type="entry name" value="L_LDH"/>
    <property type="match status" value="1"/>
</dbReference>
<proteinExistence type="inferred from homology"/>
<keyword id="KW-0963">Cytoplasm</keyword>
<keyword id="KW-0520">NAD</keyword>
<keyword id="KW-0560">Oxidoreductase</keyword>
<keyword id="KW-0597">Phosphoprotein</keyword>
<keyword id="KW-0346">Stress response</keyword>
<accession>A6U4Y2</accession>
<organism>
    <name type="scientific">Staphylococcus aureus (strain JH1)</name>
    <dbReference type="NCBI Taxonomy" id="359787"/>
    <lineage>
        <taxon>Bacteria</taxon>
        <taxon>Bacillati</taxon>
        <taxon>Bacillota</taxon>
        <taxon>Bacilli</taxon>
        <taxon>Bacillales</taxon>
        <taxon>Staphylococcaceae</taxon>
        <taxon>Staphylococcus</taxon>
    </lineage>
</organism>
<evidence type="ECO:0000250" key="1">
    <source>
        <dbReference type="UniProtKB" id="Q5HCV0"/>
    </source>
</evidence>
<evidence type="ECO:0000255" key="2">
    <source>
        <dbReference type="HAMAP-Rule" id="MF_00488"/>
    </source>
</evidence>
<evidence type="ECO:0000305" key="3"/>
<feature type="chain" id="PRO_0000343835" description="L-lactate dehydrogenase 2">
    <location>
        <begin position="1"/>
        <end position="319"/>
    </location>
</feature>
<feature type="active site" description="Proton acceptor" evidence="2">
    <location>
        <position position="178"/>
    </location>
</feature>
<feature type="binding site" evidence="2">
    <location>
        <position position="16"/>
    </location>
    <ligand>
        <name>NAD(+)</name>
        <dbReference type="ChEBI" id="CHEBI:57540"/>
    </ligand>
</feature>
<feature type="binding site" evidence="2">
    <location>
        <position position="37"/>
    </location>
    <ligand>
        <name>NAD(+)</name>
        <dbReference type="ChEBI" id="CHEBI:57540"/>
    </ligand>
</feature>
<feature type="binding site" evidence="2">
    <location>
        <position position="42"/>
    </location>
    <ligand>
        <name>NAD(+)</name>
        <dbReference type="ChEBI" id="CHEBI:57540"/>
    </ligand>
</feature>
<feature type="binding site" evidence="2">
    <location>
        <position position="68"/>
    </location>
    <ligand>
        <name>NAD(+)</name>
        <dbReference type="ChEBI" id="CHEBI:57540"/>
    </ligand>
</feature>
<feature type="binding site" evidence="2">
    <location>
        <begin position="82"/>
        <end position="83"/>
    </location>
    <ligand>
        <name>NAD(+)</name>
        <dbReference type="ChEBI" id="CHEBI:57540"/>
    </ligand>
</feature>
<feature type="binding site" evidence="2">
    <location>
        <position position="85"/>
    </location>
    <ligand>
        <name>substrate</name>
    </ligand>
</feature>
<feature type="binding site" evidence="2">
    <location>
        <position position="91"/>
    </location>
    <ligand>
        <name>substrate</name>
    </ligand>
</feature>
<feature type="binding site" evidence="2">
    <location>
        <position position="104"/>
    </location>
    <ligand>
        <name>NAD(+)</name>
        <dbReference type="ChEBI" id="CHEBI:57540"/>
    </ligand>
</feature>
<feature type="binding site" evidence="2">
    <location>
        <begin position="121"/>
        <end position="123"/>
    </location>
    <ligand>
        <name>NAD(+)</name>
        <dbReference type="ChEBI" id="CHEBI:57540"/>
    </ligand>
</feature>
<feature type="binding site" evidence="2">
    <location>
        <begin position="123"/>
        <end position="126"/>
    </location>
    <ligand>
        <name>substrate</name>
    </ligand>
</feature>
<feature type="binding site" evidence="2">
    <location>
        <position position="146"/>
    </location>
    <ligand>
        <name>NAD(+)</name>
        <dbReference type="ChEBI" id="CHEBI:57540"/>
    </ligand>
</feature>
<feature type="binding site" evidence="2">
    <location>
        <begin position="151"/>
        <end position="154"/>
    </location>
    <ligand>
        <name>substrate</name>
    </ligand>
</feature>
<feature type="binding site" evidence="2">
    <location>
        <position position="231"/>
    </location>
    <ligand>
        <name>substrate</name>
    </ligand>
</feature>
<feature type="modified residue" description="Phosphotyrosine" evidence="2">
    <location>
        <position position="222"/>
    </location>
</feature>
<name>LDH2_STAA2</name>
<comment type="function">
    <text evidence="1 2">Catalyzes the conversion of lactate to pyruvate (Potential). Contributes to S.aureus growth during nitrosative stress in both aerobically and anaerobically cultured cells, despite playing a secondary role in this resistance mechanism (By similarity).</text>
</comment>
<comment type="catalytic activity">
    <reaction evidence="2">
        <text>(S)-lactate + NAD(+) = pyruvate + NADH + H(+)</text>
        <dbReference type="Rhea" id="RHEA:23444"/>
        <dbReference type="ChEBI" id="CHEBI:15361"/>
        <dbReference type="ChEBI" id="CHEBI:15378"/>
        <dbReference type="ChEBI" id="CHEBI:16651"/>
        <dbReference type="ChEBI" id="CHEBI:57540"/>
        <dbReference type="ChEBI" id="CHEBI:57945"/>
        <dbReference type="EC" id="1.1.1.27"/>
    </reaction>
</comment>
<comment type="pathway">
    <text evidence="2">Fermentation; pyruvate fermentation to lactate; (S)-lactate from pyruvate: step 1/1.</text>
</comment>
<comment type="subunit">
    <text evidence="2">Homotetramer.</text>
</comment>
<comment type="subcellular location">
    <subcellularLocation>
        <location evidence="2">Cytoplasm</location>
    </subcellularLocation>
</comment>
<comment type="similarity">
    <text evidence="2 3">Belongs to the LDH/MDH superfamily. LDH family.</text>
</comment>
<protein>
    <recommendedName>
        <fullName evidence="2">L-lactate dehydrogenase 2</fullName>
        <shortName evidence="2">L-LDH 2</shortName>
        <ecNumber evidence="2">1.1.1.27</ecNumber>
    </recommendedName>
</protein>
<gene>
    <name evidence="2" type="primary">ldh2</name>
    <name type="ordered locus">SaurJH1_2678</name>
</gene>
<reference key="1">
    <citation type="submission" date="2007-06" db="EMBL/GenBank/DDBJ databases">
        <title>Complete sequence of chromosome of Staphylococcus aureus subsp. aureus JH1.</title>
        <authorList>
            <consortium name="US DOE Joint Genome Institute"/>
            <person name="Copeland A."/>
            <person name="Lucas S."/>
            <person name="Lapidus A."/>
            <person name="Barry K."/>
            <person name="Detter J.C."/>
            <person name="Glavina del Rio T."/>
            <person name="Hammon N."/>
            <person name="Israni S."/>
            <person name="Dalin E."/>
            <person name="Tice H."/>
            <person name="Pitluck S."/>
            <person name="Chain P."/>
            <person name="Malfatti S."/>
            <person name="Shin M."/>
            <person name="Vergez L."/>
            <person name="Schmutz J."/>
            <person name="Larimer F."/>
            <person name="Land M."/>
            <person name="Hauser L."/>
            <person name="Kyrpides N."/>
            <person name="Ivanova N."/>
            <person name="Tomasz A."/>
            <person name="Richardson P."/>
        </authorList>
    </citation>
    <scope>NUCLEOTIDE SEQUENCE [LARGE SCALE GENOMIC DNA]</scope>
    <source>
        <strain>JH1</strain>
    </source>
</reference>
<sequence>MKTFGKKVVLIGDGSVGSSYAFAMVTQGVADEFVIIDIAKDKVKADVQDLNHGTVHSPSPVDVKAGEYEDCKDADLVVITAGAPQKPGETRLQLVEKNTKIMKSIVKSVMDSGFDGYFLIAANPVDILTRFVKEYTGLPAERVIGSGTVLDSARLQYLISQELGVAPSSVDASIIGEHGDTELAVWSQANVAGISVYDTLKEQTGSEAKAEEIYVNTRDAAYEIIQAKGSTYYGIALALMRISKAILNNENNVLNVSIQLDGQYGGHKGVYLGVPTLVNQHGAVKIYEMPLSAEEQALFDKSVKILEDTFDSIKYLLED</sequence>